<proteinExistence type="uncertain"/>
<keyword id="KW-0963">Cytoplasm</keyword>
<keyword id="KW-0646">Protease inhibitor</keyword>
<keyword id="KW-1267">Proteomics identification</keyword>
<keyword id="KW-1185">Reference proteome</keyword>
<keyword id="KW-0789">Thiol protease inhibitor</keyword>
<name>CAR17_HUMAN</name>
<sequence length="110" mass="11868">MADKVLKEKRKQFIRSVGEGTINGLLGELLETRVLSQEEIEIVKCENATVMDKARALLDSVIRKGAPACQICITYICEEDSHLAGTLGLSAGPTSGNHLTTQDSQIVLPS</sequence>
<gene>
    <name type="primary">CARD17P</name>
    <name type="synonym">CARD17</name>
    <name type="synonym">INCA</name>
</gene>
<protein>
    <recommendedName>
        <fullName>Putative caspase recruitment domain-containing protein 17P</fullName>
    </recommendedName>
    <alternativeName>
        <fullName>Caspase-1 inhibitor INCA</fullName>
    </alternativeName>
    <alternativeName>
        <fullName>Inhibitory caspase recruitment domain protein</fullName>
    </alternativeName>
</protein>
<organism>
    <name type="scientific">Homo sapiens</name>
    <name type="common">Human</name>
    <dbReference type="NCBI Taxonomy" id="9606"/>
    <lineage>
        <taxon>Eukaryota</taxon>
        <taxon>Metazoa</taxon>
        <taxon>Chordata</taxon>
        <taxon>Craniata</taxon>
        <taxon>Vertebrata</taxon>
        <taxon>Euteleostomi</taxon>
        <taxon>Mammalia</taxon>
        <taxon>Eutheria</taxon>
        <taxon>Euarchontoglires</taxon>
        <taxon>Primates</taxon>
        <taxon>Haplorrhini</taxon>
        <taxon>Catarrhini</taxon>
        <taxon>Hominidae</taxon>
        <taxon>Homo</taxon>
    </lineage>
</organism>
<feature type="chain" id="PRO_0000344504" description="Putative caspase recruitment domain-containing protein 17P">
    <location>
        <begin position="1"/>
        <end position="110"/>
    </location>
</feature>
<feature type="domain" description="CARD" evidence="2">
    <location>
        <begin position="1"/>
        <end position="91"/>
    </location>
</feature>
<dbReference type="EMBL" id="AY761064">
    <property type="protein sequence ID" value="AAV28630.1"/>
    <property type="molecule type" value="mRNA"/>
</dbReference>
<dbReference type="RefSeq" id="NP_001007233.1">
    <property type="nucleotide sequence ID" value="NM_001007232.1"/>
</dbReference>
<dbReference type="SMR" id="Q5XLA6"/>
<dbReference type="BioGRID" id="136265">
    <property type="interactions" value="2"/>
</dbReference>
<dbReference type="DIP" id="DIP-61990N"/>
<dbReference type="FunCoup" id="Q5XLA6">
    <property type="interactions" value="4"/>
</dbReference>
<dbReference type="IntAct" id="Q5XLA6">
    <property type="interactions" value="2"/>
</dbReference>
<dbReference type="STRING" id="9606.ENSP00000364859"/>
<dbReference type="GlyGen" id="Q5XLA6">
    <property type="glycosylation" value="1 site"/>
</dbReference>
<dbReference type="iPTMnet" id="Q5XLA6"/>
<dbReference type="PhosphoSitePlus" id="Q5XLA6"/>
<dbReference type="BioMuta" id="CARD17"/>
<dbReference type="DMDM" id="74724394"/>
<dbReference type="jPOST" id="Q5XLA6"/>
<dbReference type="MassIVE" id="Q5XLA6"/>
<dbReference type="PaxDb" id="9606-ENSP00000364859"/>
<dbReference type="ProteomicsDB" id="65837"/>
<dbReference type="DNASU" id="440068"/>
<dbReference type="UCSC" id="uc001pir.1">
    <property type="organism name" value="human"/>
</dbReference>
<dbReference type="AGR" id="HGNC:33827"/>
<dbReference type="DisGeNET" id="440068"/>
<dbReference type="GeneCards" id="CARD17P"/>
<dbReference type="HGNC" id="HGNC:33827">
    <property type="gene designation" value="CARD17P"/>
</dbReference>
<dbReference type="MIM" id="609490">
    <property type="type" value="gene"/>
</dbReference>
<dbReference type="neXtProt" id="NX_Q5XLA6"/>
<dbReference type="PharmGKB" id="PA164717641"/>
<dbReference type="VEuPathDB" id="HostDB:ENSG00000255221"/>
<dbReference type="eggNOG" id="KOG3573">
    <property type="taxonomic scope" value="Eukaryota"/>
</dbReference>
<dbReference type="HOGENOM" id="CLU_119795_1_0_1"/>
<dbReference type="InParanoid" id="Q5XLA6"/>
<dbReference type="OMA" id="RIFITHI"/>
<dbReference type="PAN-GO" id="Q5XLA6">
    <property type="GO annotations" value="2 GO annotations based on evolutionary models"/>
</dbReference>
<dbReference type="PhylomeDB" id="Q5XLA6"/>
<dbReference type="TreeFam" id="TF330675"/>
<dbReference type="PathwayCommons" id="Q5XLA6"/>
<dbReference type="SignaLink" id="Q5XLA6"/>
<dbReference type="BioGRID-ORCS" id="440068">
    <property type="hits" value="15 hits in 1135 CRISPR screens"/>
</dbReference>
<dbReference type="GenomeRNAi" id="440068"/>
<dbReference type="Pharos" id="Q5XLA6">
    <property type="development level" value="Tbio"/>
</dbReference>
<dbReference type="PRO" id="PR:Q5XLA6"/>
<dbReference type="Proteomes" id="UP000005640">
    <property type="component" value="Chromosome 11"/>
</dbReference>
<dbReference type="RNAct" id="Q5XLA6">
    <property type="molecule type" value="protein"/>
</dbReference>
<dbReference type="GO" id="GO:0005737">
    <property type="term" value="C:cytoplasm"/>
    <property type="evidence" value="ECO:0007669"/>
    <property type="project" value="UniProtKB-SubCell"/>
</dbReference>
<dbReference type="GO" id="GO:0032991">
    <property type="term" value="C:protein-containing complex"/>
    <property type="evidence" value="ECO:0000314"/>
    <property type="project" value="UniProtKB"/>
</dbReference>
<dbReference type="GO" id="GO:0089720">
    <property type="term" value="F:caspase binding"/>
    <property type="evidence" value="ECO:0000353"/>
    <property type="project" value="UniProtKB"/>
</dbReference>
<dbReference type="GO" id="GO:0004197">
    <property type="term" value="F:cysteine-type endopeptidase activity"/>
    <property type="evidence" value="ECO:0007669"/>
    <property type="project" value="InterPro"/>
</dbReference>
<dbReference type="GO" id="GO:0004869">
    <property type="term" value="F:cysteine-type endopeptidase inhibitor activity"/>
    <property type="evidence" value="ECO:0007669"/>
    <property type="project" value="UniProtKB-KW"/>
</dbReference>
<dbReference type="GO" id="GO:0042802">
    <property type="term" value="F:identical protein binding"/>
    <property type="evidence" value="ECO:0000314"/>
    <property type="project" value="UniProtKB"/>
</dbReference>
<dbReference type="GO" id="GO:0071222">
    <property type="term" value="P:cellular response to lipopolysaccharide"/>
    <property type="evidence" value="ECO:0000314"/>
    <property type="project" value="UniProtKB"/>
</dbReference>
<dbReference type="GO" id="GO:0032691">
    <property type="term" value="P:negative regulation of interleukin-1 beta production"/>
    <property type="evidence" value="ECO:0000314"/>
    <property type="project" value="UniProtKB"/>
</dbReference>
<dbReference type="GO" id="GO:0006508">
    <property type="term" value="P:proteolysis"/>
    <property type="evidence" value="ECO:0007669"/>
    <property type="project" value="InterPro"/>
</dbReference>
<dbReference type="GO" id="GO:0042981">
    <property type="term" value="P:regulation of apoptotic process"/>
    <property type="evidence" value="ECO:0007669"/>
    <property type="project" value="InterPro"/>
</dbReference>
<dbReference type="CDD" id="cd08325">
    <property type="entry name" value="CARD_CASP1-like"/>
    <property type="match status" value="1"/>
</dbReference>
<dbReference type="FunFam" id="1.10.533.10:FF:000031">
    <property type="entry name" value="Caspase 1, isoform CRA_b"/>
    <property type="match status" value="1"/>
</dbReference>
<dbReference type="Gene3D" id="1.10.533.10">
    <property type="entry name" value="Death Domain, Fas"/>
    <property type="match status" value="1"/>
</dbReference>
<dbReference type="InterPro" id="IPR001315">
    <property type="entry name" value="CARD"/>
</dbReference>
<dbReference type="InterPro" id="IPR011029">
    <property type="entry name" value="DEATH-like_dom_sf"/>
</dbReference>
<dbReference type="InterPro" id="IPR002398">
    <property type="entry name" value="Pept_C14"/>
</dbReference>
<dbReference type="PANTHER" id="PTHR47901">
    <property type="entry name" value="CASPASE RECRUITMENT DOMAIN-CONTAINING PROTEIN 18"/>
    <property type="match status" value="1"/>
</dbReference>
<dbReference type="PANTHER" id="PTHR47901:SF3">
    <property type="entry name" value="CASPASE-1"/>
    <property type="match status" value="1"/>
</dbReference>
<dbReference type="Pfam" id="PF00619">
    <property type="entry name" value="CARD"/>
    <property type="match status" value="1"/>
</dbReference>
<dbReference type="SMART" id="SM00114">
    <property type="entry name" value="CARD"/>
    <property type="match status" value="1"/>
</dbReference>
<dbReference type="SUPFAM" id="SSF47986">
    <property type="entry name" value="DEATH domain"/>
    <property type="match status" value="1"/>
</dbReference>
<dbReference type="PROSITE" id="PS50209">
    <property type="entry name" value="CARD"/>
    <property type="match status" value="1"/>
</dbReference>
<reference key="1">
    <citation type="journal article" date="2004" name="J. Biol. Chem.">
        <title>INCA, a novel human caspase recruitment domain protein that inhibits interleukin-1beta generation.</title>
        <authorList>
            <person name="Lamkanfi M."/>
            <person name="Denecker G."/>
            <person name="Kalai M."/>
            <person name="D'hondt K."/>
            <person name="Meeus A."/>
            <person name="Declercq W."/>
            <person name="Saelens X."/>
            <person name="Vandenabeele P."/>
        </authorList>
    </citation>
    <scope>NUCLEOTIDE SEQUENCE [MRNA]</scope>
    <scope>FUNCTION</scope>
    <scope>INTERACTION WITH CASP1</scope>
    <scope>INDUCTION</scope>
    <scope>TISSUE SPECIFICITY</scope>
</reference>
<evidence type="ECO:0000250" key="1"/>
<evidence type="ECO:0000255" key="2">
    <source>
        <dbReference type="PROSITE-ProRule" id="PRU00046"/>
    </source>
</evidence>
<evidence type="ECO:0000269" key="3">
    <source>
    </source>
</evidence>
<evidence type="ECO:0000305" key="4"/>
<accession>Q5XLA6</accession>
<comment type="function">
    <text evidence="3">Regulator of procaspase-1/CASP1 activation implicated in the regulation of the proteolytic maturation of pro-IL-1beta/IL1B and its release during inflammation. Inhibits the release of IL1B in response to LPS in monocytes. However, unlike CASP1, do not induce NF-kappa-B activation.</text>
</comment>
<comment type="subunit">
    <text evidence="3">Interacts with pro-CASP1.</text>
</comment>
<comment type="interaction">
    <interactant intactId="EBI-16203934">
        <id>Q5XLA6</id>
    </interactant>
    <interactant intactId="EBI-516667">
        <id>P29466</id>
        <label>CASP1</label>
    </interactant>
    <organismsDiffer>false</organismsDiffer>
    <experiments>3</experiments>
</comment>
<comment type="subcellular location">
    <subcellularLocation>
        <location evidence="1">Cytoplasm</location>
    </subcellularLocation>
</comment>
<comment type="tissue specificity">
    <text evidence="3">Ubiquitous.</text>
</comment>
<comment type="induction">
    <text evidence="3">By IFNG/IFN-gamma in monocytic cell lines.</text>
</comment>
<comment type="caution">
    <text evidence="4">Could be the product of a pseudogene.</text>
</comment>